<evidence type="ECO:0000250" key="1"/>
<evidence type="ECO:0000305" key="2"/>
<accession>B1VKJ4</accession>
<sequence>MSRQSTVEKKIEKFDPIYHNRLVNMVVNRILKHGKKSLAYRIFYQSLKKIQQKTEKNPLIVLRQAIQKLTPKLIVKSRRVSGSTYQVPIEIKKKEGKILAIRWLLESSRKRSGRNMHFKLSYEIMDAAREKGNAIRKKEEIHKMAESNKAFAHYH</sequence>
<reference key="1">
    <citation type="journal article" date="2008" name="BMC Plant Biol.">
        <title>Complete nucleotide sequence of the Cryptomeria japonica D. Don. chloroplast genome and comparative chloroplast genomics: diversified genomic structure of coniferous species.</title>
        <authorList>
            <person name="Hirao T."/>
            <person name="Watanabe A."/>
            <person name="Kurita M."/>
            <person name="Kondo T."/>
            <person name="Takata K."/>
        </authorList>
    </citation>
    <scope>NUCLEOTIDE SEQUENCE [LARGE SCALE GENOMIC DNA]</scope>
</reference>
<comment type="function">
    <text evidence="1">One of the primary rRNA binding proteins, it binds directly to 16S rRNA where it nucleates assembly of the head domain of the 30S subunit.</text>
</comment>
<comment type="subunit">
    <text evidence="1">Part of the 30S ribosomal subunit.</text>
</comment>
<comment type="subcellular location">
    <subcellularLocation>
        <location>Plastid</location>
        <location>Chloroplast</location>
    </subcellularLocation>
</comment>
<comment type="similarity">
    <text evidence="2">Belongs to the universal ribosomal protein uS7 family.</text>
</comment>
<geneLocation type="chloroplast"/>
<organism>
    <name type="scientific">Cryptomeria japonica</name>
    <name type="common">Japanese cedar</name>
    <name type="synonym">Cupressus japonica</name>
    <dbReference type="NCBI Taxonomy" id="3369"/>
    <lineage>
        <taxon>Eukaryota</taxon>
        <taxon>Viridiplantae</taxon>
        <taxon>Streptophyta</taxon>
        <taxon>Embryophyta</taxon>
        <taxon>Tracheophyta</taxon>
        <taxon>Spermatophyta</taxon>
        <taxon>Pinopsida</taxon>
        <taxon>Pinidae</taxon>
        <taxon>Conifers II</taxon>
        <taxon>Cupressales</taxon>
        <taxon>Cupressaceae</taxon>
        <taxon>Cryptomeria</taxon>
    </lineage>
</organism>
<keyword id="KW-0150">Chloroplast</keyword>
<keyword id="KW-0934">Plastid</keyword>
<keyword id="KW-0687">Ribonucleoprotein</keyword>
<keyword id="KW-0689">Ribosomal protein</keyword>
<keyword id="KW-0694">RNA-binding</keyword>
<keyword id="KW-0699">rRNA-binding</keyword>
<dbReference type="EMBL" id="AP009377">
    <property type="protein sequence ID" value="BAG16705.1"/>
    <property type="molecule type" value="Genomic_DNA"/>
</dbReference>
<dbReference type="RefSeq" id="YP_001806707.1">
    <property type="nucleotide sequence ID" value="NC_010548.1"/>
</dbReference>
<dbReference type="SMR" id="B1VKJ4"/>
<dbReference type="GeneID" id="6166573"/>
<dbReference type="KEGG" id="cjf:6166573"/>
<dbReference type="OrthoDB" id="35139at2759"/>
<dbReference type="GO" id="GO:0009507">
    <property type="term" value="C:chloroplast"/>
    <property type="evidence" value="ECO:0007669"/>
    <property type="project" value="UniProtKB-SubCell"/>
</dbReference>
<dbReference type="GO" id="GO:0015935">
    <property type="term" value="C:small ribosomal subunit"/>
    <property type="evidence" value="ECO:0007669"/>
    <property type="project" value="InterPro"/>
</dbReference>
<dbReference type="GO" id="GO:0019843">
    <property type="term" value="F:rRNA binding"/>
    <property type="evidence" value="ECO:0007669"/>
    <property type="project" value="UniProtKB-UniRule"/>
</dbReference>
<dbReference type="GO" id="GO:0003735">
    <property type="term" value="F:structural constituent of ribosome"/>
    <property type="evidence" value="ECO:0007669"/>
    <property type="project" value="InterPro"/>
</dbReference>
<dbReference type="GO" id="GO:0006412">
    <property type="term" value="P:translation"/>
    <property type="evidence" value="ECO:0007669"/>
    <property type="project" value="UniProtKB-UniRule"/>
</dbReference>
<dbReference type="CDD" id="cd14871">
    <property type="entry name" value="uS7_Chloroplast"/>
    <property type="match status" value="1"/>
</dbReference>
<dbReference type="FunFam" id="1.10.455.10:FF:000001">
    <property type="entry name" value="30S ribosomal protein S7"/>
    <property type="match status" value="1"/>
</dbReference>
<dbReference type="Gene3D" id="1.10.455.10">
    <property type="entry name" value="Ribosomal protein S7 domain"/>
    <property type="match status" value="1"/>
</dbReference>
<dbReference type="HAMAP" id="MF_00480_B">
    <property type="entry name" value="Ribosomal_uS7_B"/>
    <property type="match status" value="1"/>
</dbReference>
<dbReference type="InterPro" id="IPR000235">
    <property type="entry name" value="Ribosomal_uS7"/>
</dbReference>
<dbReference type="InterPro" id="IPR005717">
    <property type="entry name" value="Ribosomal_uS7_bac/org-type"/>
</dbReference>
<dbReference type="InterPro" id="IPR020606">
    <property type="entry name" value="Ribosomal_uS7_CS"/>
</dbReference>
<dbReference type="InterPro" id="IPR023798">
    <property type="entry name" value="Ribosomal_uS7_dom"/>
</dbReference>
<dbReference type="InterPro" id="IPR036823">
    <property type="entry name" value="Ribosomal_uS7_dom_sf"/>
</dbReference>
<dbReference type="NCBIfam" id="TIGR01029">
    <property type="entry name" value="rpsG_bact"/>
    <property type="match status" value="1"/>
</dbReference>
<dbReference type="PANTHER" id="PTHR11205">
    <property type="entry name" value="RIBOSOMAL PROTEIN S7"/>
    <property type="match status" value="1"/>
</dbReference>
<dbReference type="Pfam" id="PF00177">
    <property type="entry name" value="Ribosomal_S7"/>
    <property type="match status" value="1"/>
</dbReference>
<dbReference type="PIRSF" id="PIRSF002122">
    <property type="entry name" value="RPS7p_RPS7a_RPS5e_RPS7o"/>
    <property type="match status" value="1"/>
</dbReference>
<dbReference type="SUPFAM" id="SSF47973">
    <property type="entry name" value="Ribosomal protein S7"/>
    <property type="match status" value="1"/>
</dbReference>
<dbReference type="PROSITE" id="PS00052">
    <property type="entry name" value="RIBOSOMAL_S7"/>
    <property type="match status" value="1"/>
</dbReference>
<feature type="chain" id="PRO_0000344333" description="Small ribosomal subunit protein uS7c">
    <location>
        <begin position="1"/>
        <end position="155"/>
    </location>
</feature>
<proteinExistence type="inferred from homology"/>
<name>RR7_CRYJA</name>
<protein>
    <recommendedName>
        <fullName evidence="2">Small ribosomal subunit protein uS7c</fullName>
    </recommendedName>
    <alternativeName>
        <fullName>30S ribosomal protein S7, chloroplastic</fullName>
    </alternativeName>
</protein>
<gene>
    <name type="primary">rps7</name>
</gene>